<evidence type="ECO:0000255" key="1">
    <source>
        <dbReference type="HAMAP-Rule" id="MF_00443"/>
    </source>
</evidence>
<name>THIG_CUPMC</name>
<keyword id="KW-0963">Cytoplasm</keyword>
<keyword id="KW-1185">Reference proteome</keyword>
<keyword id="KW-0704">Schiff base</keyword>
<keyword id="KW-0784">Thiamine biosynthesis</keyword>
<keyword id="KW-0808">Transferase</keyword>
<proteinExistence type="inferred from homology"/>
<reference key="1">
    <citation type="journal article" date="2010" name="PLoS ONE">
        <title>The complete genome sequence of Cupriavidus metallidurans strain CH34, a master survivalist in harsh and anthropogenic environments.</title>
        <authorList>
            <person name="Janssen P.J."/>
            <person name="Van Houdt R."/>
            <person name="Moors H."/>
            <person name="Monsieurs P."/>
            <person name="Morin N."/>
            <person name="Michaux A."/>
            <person name="Benotmane M.A."/>
            <person name="Leys N."/>
            <person name="Vallaeys T."/>
            <person name="Lapidus A."/>
            <person name="Monchy S."/>
            <person name="Medigue C."/>
            <person name="Taghavi S."/>
            <person name="McCorkle S."/>
            <person name="Dunn J."/>
            <person name="van der Lelie D."/>
            <person name="Mergeay M."/>
        </authorList>
    </citation>
    <scope>NUCLEOTIDE SEQUENCE [LARGE SCALE GENOMIC DNA]</scope>
    <source>
        <strain>ATCC 43123 / DSM 2839 / NBRC 102507 / CH34</strain>
    </source>
</reference>
<dbReference type="EC" id="2.8.1.10" evidence="1"/>
<dbReference type="EMBL" id="CP000352">
    <property type="protein sequence ID" value="ABF07051.1"/>
    <property type="molecule type" value="Genomic_DNA"/>
</dbReference>
<dbReference type="RefSeq" id="WP_008648498.1">
    <property type="nucleotide sequence ID" value="NC_007973.1"/>
</dbReference>
<dbReference type="SMR" id="Q1LS25"/>
<dbReference type="STRING" id="266264.Rmet_0165"/>
<dbReference type="KEGG" id="rme:Rmet_0165"/>
<dbReference type="eggNOG" id="COG2022">
    <property type="taxonomic scope" value="Bacteria"/>
</dbReference>
<dbReference type="HOGENOM" id="CLU_062233_1_0_4"/>
<dbReference type="UniPathway" id="UPA00060"/>
<dbReference type="Proteomes" id="UP000002429">
    <property type="component" value="Chromosome"/>
</dbReference>
<dbReference type="GO" id="GO:0005737">
    <property type="term" value="C:cytoplasm"/>
    <property type="evidence" value="ECO:0007669"/>
    <property type="project" value="UniProtKB-SubCell"/>
</dbReference>
<dbReference type="GO" id="GO:1990107">
    <property type="term" value="F:thiazole synthase activity"/>
    <property type="evidence" value="ECO:0007669"/>
    <property type="project" value="UniProtKB-EC"/>
</dbReference>
<dbReference type="GO" id="GO:0009229">
    <property type="term" value="P:thiamine diphosphate biosynthetic process"/>
    <property type="evidence" value="ECO:0007669"/>
    <property type="project" value="UniProtKB-UniRule"/>
</dbReference>
<dbReference type="CDD" id="cd04728">
    <property type="entry name" value="ThiG"/>
    <property type="match status" value="1"/>
</dbReference>
<dbReference type="Gene3D" id="3.20.20.70">
    <property type="entry name" value="Aldolase class I"/>
    <property type="match status" value="1"/>
</dbReference>
<dbReference type="HAMAP" id="MF_00443">
    <property type="entry name" value="ThiG"/>
    <property type="match status" value="1"/>
</dbReference>
<dbReference type="InterPro" id="IPR013785">
    <property type="entry name" value="Aldolase_TIM"/>
</dbReference>
<dbReference type="InterPro" id="IPR033983">
    <property type="entry name" value="Thiazole_synthase_ThiG"/>
</dbReference>
<dbReference type="InterPro" id="IPR008867">
    <property type="entry name" value="ThiG"/>
</dbReference>
<dbReference type="PANTHER" id="PTHR34266">
    <property type="entry name" value="THIAZOLE SYNTHASE"/>
    <property type="match status" value="1"/>
</dbReference>
<dbReference type="PANTHER" id="PTHR34266:SF2">
    <property type="entry name" value="THIAZOLE SYNTHASE"/>
    <property type="match status" value="1"/>
</dbReference>
<dbReference type="Pfam" id="PF05690">
    <property type="entry name" value="ThiG"/>
    <property type="match status" value="1"/>
</dbReference>
<dbReference type="SUPFAM" id="SSF110399">
    <property type="entry name" value="ThiG-like"/>
    <property type="match status" value="1"/>
</dbReference>
<gene>
    <name evidence="1" type="primary">thiG</name>
    <name type="ordered locus">Rmet_0165</name>
</gene>
<protein>
    <recommendedName>
        <fullName evidence="1">Thiazole synthase</fullName>
        <ecNumber evidence="1">2.8.1.10</ecNumber>
    </recommendedName>
</protein>
<sequence length="282" mass="30408">MTFEPTETLRDPFVLYGESFASRLLLGTARYPSPATLQAAVEASRPAMITVALRRQTAVGSGDGQTLGGETFWQMLRTLGVPVLPNTAGCFTAQEVITTAMMAREVFETDWIKLELIGDDYTLQPDTLNMPAVAETLVKEGFKVLPYCTEDLVLCRRLLDVGCQALMPWAAPIGTGRGAVNPHAMRTLRDRLPDTPLIVDAGLGLPSHAAQVLEWGYDGVLLNTAVAQSAYPVNMARAFALAVEAGRTAYLAGPMPEREVAQASTPVVGMPFWHAEGAEDRA</sequence>
<accession>Q1LS25</accession>
<comment type="function">
    <text evidence="1">Catalyzes the rearrangement of 1-deoxy-D-xylulose 5-phosphate (DXP) to produce the thiazole phosphate moiety of thiamine. Sulfur is provided by the thiocarboxylate moiety of the carrier protein ThiS. In vitro, sulfur can be provided by H(2)S.</text>
</comment>
<comment type="catalytic activity">
    <reaction evidence="1">
        <text>[ThiS sulfur-carrier protein]-C-terminal-Gly-aminoethanethioate + 2-iminoacetate + 1-deoxy-D-xylulose 5-phosphate = [ThiS sulfur-carrier protein]-C-terminal Gly-Gly + 2-[(2R,5Z)-2-carboxy-4-methylthiazol-5(2H)-ylidene]ethyl phosphate + 2 H2O + H(+)</text>
        <dbReference type="Rhea" id="RHEA:26297"/>
        <dbReference type="Rhea" id="RHEA-COMP:12909"/>
        <dbReference type="Rhea" id="RHEA-COMP:19908"/>
        <dbReference type="ChEBI" id="CHEBI:15377"/>
        <dbReference type="ChEBI" id="CHEBI:15378"/>
        <dbReference type="ChEBI" id="CHEBI:57792"/>
        <dbReference type="ChEBI" id="CHEBI:62899"/>
        <dbReference type="ChEBI" id="CHEBI:77846"/>
        <dbReference type="ChEBI" id="CHEBI:90778"/>
        <dbReference type="ChEBI" id="CHEBI:232372"/>
        <dbReference type="EC" id="2.8.1.10"/>
    </reaction>
</comment>
<comment type="pathway">
    <text evidence="1">Cofactor biosynthesis; thiamine diphosphate biosynthesis.</text>
</comment>
<comment type="subunit">
    <text evidence="1">Homotetramer. Forms heterodimers with either ThiH or ThiS.</text>
</comment>
<comment type="subcellular location">
    <subcellularLocation>
        <location evidence="1">Cytoplasm</location>
    </subcellularLocation>
</comment>
<comment type="similarity">
    <text evidence="1">Belongs to the ThiG family.</text>
</comment>
<organism>
    <name type="scientific">Cupriavidus metallidurans (strain ATCC 43123 / DSM 2839 / NBRC 102507 / CH34)</name>
    <name type="common">Ralstonia metallidurans</name>
    <dbReference type="NCBI Taxonomy" id="266264"/>
    <lineage>
        <taxon>Bacteria</taxon>
        <taxon>Pseudomonadati</taxon>
        <taxon>Pseudomonadota</taxon>
        <taxon>Betaproteobacteria</taxon>
        <taxon>Burkholderiales</taxon>
        <taxon>Burkholderiaceae</taxon>
        <taxon>Cupriavidus</taxon>
    </lineage>
</organism>
<feature type="chain" id="PRO_1000026034" description="Thiazole synthase">
    <location>
        <begin position="1"/>
        <end position="282"/>
    </location>
</feature>
<feature type="active site" description="Schiff-base intermediate with DXP" evidence="1">
    <location>
        <position position="113"/>
    </location>
</feature>
<feature type="binding site" evidence="1">
    <location>
        <position position="174"/>
    </location>
    <ligand>
        <name>1-deoxy-D-xylulose 5-phosphate</name>
        <dbReference type="ChEBI" id="CHEBI:57792"/>
    </ligand>
</feature>
<feature type="binding site" evidence="1">
    <location>
        <begin position="201"/>
        <end position="202"/>
    </location>
    <ligand>
        <name>1-deoxy-D-xylulose 5-phosphate</name>
        <dbReference type="ChEBI" id="CHEBI:57792"/>
    </ligand>
</feature>
<feature type="binding site" evidence="1">
    <location>
        <begin position="223"/>
        <end position="224"/>
    </location>
    <ligand>
        <name>1-deoxy-D-xylulose 5-phosphate</name>
        <dbReference type="ChEBI" id="CHEBI:57792"/>
    </ligand>
</feature>